<proteinExistence type="evidence at protein level"/>
<accession>O70514</accession>
<accession>Q62399</accession>
<feature type="signal peptide" evidence="3">
    <location>
        <begin position="1"/>
        <end position="20"/>
    </location>
</feature>
<feature type="chain" id="PRO_0000245513" description="Fibroblast growth factor-binding protein 1">
    <location>
        <begin position="21"/>
        <end position="251"/>
    </location>
</feature>
<feature type="region of interest" description="Disordered" evidence="4">
    <location>
        <begin position="25"/>
        <end position="62"/>
    </location>
</feature>
<feature type="region of interest" description="Disordered" evidence="4">
    <location>
        <begin position="160"/>
        <end position="189"/>
    </location>
</feature>
<feature type="region of interest" description="Sufficient for interaction with FGF2 and FGF2-induced effects" evidence="1">
    <location>
        <begin position="210"/>
        <end position="251"/>
    </location>
</feature>
<feature type="compositionally biased region" description="Basic and acidic residues" evidence="4">
    <location>
        <begin position="170"/>
        <end position="182"/>
    </location>
</feature>
<feature type="glycosylation site" description="O-linked (GalNAc...) serine" evidence="1">
    <location>
        <position position="175"/>
    </location>
</feature>
<feature type="disulfide bond" evidence="1">
    <location>
        <begin position="74"/>
        <end position="91"/>
    </location>
</feature>
<feature type="disulfide bond" evidence="1">
    <location>
        <begin position="100"/>
        <end position="133"/>
    </location>
</feature>
<feature type="disulfide bond" evidence="1">
    <location>
        <begin position="109"/>
        <end position="145"/>
    </location>
</feature>
<feature type="disulfide bond" evidence="1">
    <location>
        <begin position="214"/>
        <end position="251"/>
    </location>
</feature>
<feature type="disulfide bond" evidence="1">
    <location>
        <begin position="231"/>
        <end position="239"/>
    </location>
</feature>
<feature type="sequence conflict" description="In Ref. 1; AAB05227." evidence="8" ref="1">
    <original>N</original>
    <variation>D</variation>
    <location>
        <position position="135"/>
    </location>
</feature>
<feature type="sequence conflict" description="In Ref. 1; AAB05227." evidence="8" ref="1">
    <original>V</original>
    <variation>I</variation>
    <location>
        <position position="193"/>
    </location>
</feature>
<feature type="sequence conflict" description="In Ref. 1; AAB05227." evidence="8" ref="1">
    <original>A</original>
    <variation>T</variation>
    <location>
        <position position="208"/>
    </location>
</feature>
<keyword id="KW-1003">Cell membrane</keyword>
<keyword id="KW-1015">Disulfide bond</keyword>
<keyword id="KW-0325">Glycoprotein</keyword>
<keyword id="KW-0340">Growth factor binding</keyword>
<keyword id="KW-0472">Membrane</keyword>
<keyword id="KW-1185">Reference proteome</keyword>
<keyword id="KW-0964">Secreted</keyword>
<keyword id="KW-0732">Signal</keyword>
<gene>
    <name type="primary">Fgfbp1</name>
</gene>
<comment type="function">
    <text evidence="1">Acts as a carrier protein that releases fibroblast-binding factors (FGFs) from the extracellular matrix (EM) storage and thus enhances the mitogenic activity of FGFs. Enhances FGF2 signaling during tissue repair, angiogenesis and in tumor growth (By similarity).</text>
</comment>
<comment type="subunit">
    <text evidence="1 7">Found in a complex with FGFBP1, FGF1 and FGF2. Interacts with FGF1, FGF7, FGF10, FGF22 and HSPG2 (By similarity). Interacts with FGF2.</text>
</comment>
<comment type="subcellular location">
    <subcellularLocation>
        <location evidence="2">Secreted</location>
        <location evidence="2">Extracellular space</location>
    </subcellularLocation>
    <subcellularLocation>
        <location evidence="2">Cell membrane</location>
        <topology evidence="2">Peripheral membrane protein</topology>
    </subcellularLocation>
    <text evidence="2">Extracellular and plasma membrane-associated.</text>
</comment>
<comment type="tissue specificity">
    <text evidence="6 7">Expressed in intestine, ovary, lung, placenta and normal and wounded skin.</text>
</comment>
<comment type="developmental stage">
    <text evidence="5 7">Expressed in digestive system, skin, hair follicles, the dental germ, respiratory tract, various glandular tissues, kidney, liver and certain areas of the central nervous system between 8 and 16 dpc (at protein level). Expressed. in embryo between 9 to 18 dpc. Expressed at 14 dpc in the epithelial cells and 18 dpc in basal epithelial cells of intestinal crypts. Expressed in mesenchymal and epidermal structures of the body wall at 9 dpc. Expressed in basal cells of the subepidermal layer of the skin at 12 dpc. Expressed in hair follicles at 14 dpc.</text>
</comment>
<comment type="miscellaneous">
    <text>Expression is significantly up-regulated in skin papillomas and carcinomas.</text>
</comment>
<comment type="similarity">
    <text evidence="8">Belongs to the fibroblast growth factor-binding protein family.</text>
</comment>
<name>FGFP1_MOUSE</name>
<protein>
    <recommendedName>
        <fullName>Fibroblast growth factor-binding protein 1</fullName>
        <shortName>FGF-BP</shortName>
        <shortName>FGF-BP1</shortName>
        <shortName>FGF-binding protein 1</shortName>
        <shortName>FGFBP-1</shortName>
    </recommendedName>
</protein>
<dbReference type="EMBL" id="U49641">
    <property type="protein sequence ID" value="AAB05227.1"/>
    <property type="molecule type" value="mRNA"/>
</dbReference>
<dbReference type="EMBL" id="AF065441">
    <property type="protein sequence ID" value="AAC17439.1"/>
    <property type="molecule type" value="mRNA"/>
</dbReference>
<dbReference type="EMBL" id="AK146625">
    <property type="protein sequence ID" value="BAE27314.1"/>
    <property type="molecule type" value="mRNA"/>
</dbReference>
<dbReference type="EMBL" id="BC065774">
    <property type="protein sequence ID" value="AAH65774.1"/>
    <property type="molecule type" value="mRNA"/>
</dbReference>
<dbReference type="CCDS" id="CCDS19268.1"/>
<dbReference type="RefSeq" id="NP_001258545.1">
    <property type="nucleotide sequence ID" value="NM_001271616.1"/>
</dbReference>
<dbReference type="RefSeq" id="NP_001408505.1">
    <property type="nucleotide sequence ID" value="NM_001421576.1"/>
</dbReference>
<dbReference type="RefSeq" id="NP_001408506.1">
    <property type="nucleotide sequence ID" value="NM_001421577.1"/>
</dbReference>
<dbReference type="RefSeq" id="NP_032035.2">
    <property type="nucleotide sequence ID" value="NM_008009.4"/>
</dbReference>
<dbReference type="RefSeq" id="XP_006503774.1">
    <property type="nucleotide sequence ID" value="XM_006503711.3"/>
</dbReference>
<dbReference type="RefSeq" id="XP_006503775.1">
    <property type="nucleotide sequence ID" value="XM_006503712.5"/>
</dbReference>
<dbReference type="SMR" id="O70514"/>
<dbReference type="BioGRID" id="199655">
    <property type="interactions" value="4"/>
</dbReference>
<dbReference type="FunCoup" id="O70514">
    <property type="interactions" value="60"/>
</dbReference>
<dbReference type="STRING" id="10090.ENSMUSP00000143011"/>
<dbReference type="GlyCosmos" id="O70514">
    <property type="glycosylation" value="1 site, No reported glycans"/>
</dbReference>
<dbReference type="GlyGen" id="O70514">
    <property type="glycosylation" value="2 sites"/>
</dbReference>
<dbReference type="PhosphoSitePlus" id="O70514"/>
<dbReference type="PaxDb" id="10090-ENSMUSP00000056900"/>
<dbReference type="ProteomicsDB" id="272998"/>
<dbReference type="Antibodypedia" id="977">
    <property type="antibodies" value="247 antibodies from 26 providers"/>
</dbReference>
<dbReference type="DNASU" id="14181"/>
<dbReference type="Ensembl" id="ENSMUST00000061299.9">
    <property type="protein sequence ID" value="ENSMUSP00000056900.8"/>
    <property type="gene ID" value="ENSMUSG00000048373.9"/>
</dbReference>
<dbReference type="Ensembl" id="ENSMUST00000199481.2">
    <property type="protein sequence ID" value="ENSMUSP00000143011.2"/>
    <property type="gene ID" value="ENSMUSG00000048373.9"/>
</dbReference>
<dbReference type="Ensembl" id="ENSMUST00000199894.2">
    <property type="protein sequence ID" value="ENSMUSP00000142520.2"/>
    <property type="gene ID" value="ENSMUSG00000048373.9"/>
</dbReference>
<dbReference type="GeneID" id="14181"/>
<dbReference type="KEGG" id="mmu:14181"/>
<dbReference type="UCSC" id="uc008xid.3">
    <property type="organism name" value="mouse"/>
</dbReference>
<dbReference type="AGR" id="MGI:1096350"/>
<dbReference type="CTD" id="9982"/>
<dbReference type="MGI" id="MGI:1096350">
    <property type="gene designation" value="Fgfbp1"/>
</dbReference>
<dbReference type="VEuPathDB" id="HostDB:ENSMUSG00000048373"/>
<dbReference type="eggNOG" id="ENOG502RZQ6">
    <property type="taxonomic scope" value="Eukaryota"/>
</dbReference>
<dbReference type="GeneTree" id="ENSGT00940000154372"/>
<dbReference type="InParanoid" id="O70514"/>
<dbReference type="OMA" id="VYWKQIG"/>
<dbReference type="OrthoDB" id="8875908at2759"/>
<dbReference type="PhylomeDB" id="O70514"/>
<dbReference type="TreeFam" id="TF335877"/>
<dbReference type="Reactome" id="R-MMU-190377">
    <property type="pathway name" value="FGFR2b ligand binding and activation"/>
</dbReference>
<dbReference type="BioGRID-ORCS" id="14181">
    <property type="hits" value="2 hits in 78 CRISPR screens"/>
</dbReference>
<dbReference type="ChiTaRS" id="Fgfbp1">
    <property type="organism name" value="mouse"/>
</dbReference>
<dbReference type="PRO" id="PR:O70514"/>
<dbReference type="Proteomes" id="UP000000589">
    <property type="component" value="Chromosome 5"/>
</dbReference>
<dbReference type="RNAct" id="O70514">
    <property type="molecule type" value="protein"/>
</dbReference>
<dbReference type="Bgee" id="ENSMUSG00000048373">
    <property type="expression patterns" value="Expressed in mammary bud and 157 other cell types or tissues"/>
</dbReference>
<dbReference type="GO" id="GO:0009986">
    <property type="term" value="C:cell surface"/>
    <property type="evidence" value="ECO:0000314"/>
    <property type="project" value="MGI"/>
</dbReference>
<dbReference type="GO" id="GO:0005576">
    <property type="term" value="C:extracellular region"/>
    <property type="evidence" value="ECO:0000314"/>
    <property type="project" value="MGI"/>
</dbReference>
<dbReference type="GO" id="GO:0005886">
    <property type="term" value="C:plasma membrane"/>
    <property type="evidence" value="ECO:0007669"/>
    <property type="project" value="UniProtKB-SubCell"/>
</dbReference>
<dbReference type="GO" id="GO:0017134">
    <property type="term" value="F:fibroblast growth factor binding"/>
    <property type="evidence" value="ECO:0000353"/>
    <property type="project" value="UniProtKB"/>
</dbReference>
<dbReference type="GO" id="GO:0008543">
    <property type="term" value="P:fibroblast growth factor receptor signaling pathway"/>
    <property type="evidence" value="ECO:0000316"/>
    <property type="project" value="MGI"/>
</dbReference>
<dbReference type="GO" id="GO:0051450">
    <property type="term" value="P:myoblast proliferation"/>
    <property type="evidence" value="ECO:0000316"/>
    <property type="project" value="MGI"/>
</dbReference>
<dbReference type="GO" id="GO:1903589">
    <property type="term" value="P:positive regulation of blood vessel endothelial cell proliferation involved in sprouting angiogenesis"/>
    <property type="evidence" value="ECO:0007669"/>
    <property type="project" value="Ensembl"/>
</dbReference>
<dbReference type="GO" id="GO:0090050">
    <property type="term" value="P:positive regulation of cell migration involved in sprouting angiogenesis"/>
    <property type="evidence" value="ECO:0007669"/>
    <property type="project" value="Ensembl"/>
</dbReference>
<dbReference type="GO" id="GO:0045743">
    <property type="term" value="P:positive regulation of fibroblast growth factor receptor signaling pathway"/>
    <property type="evidence" value="ECO:0000316"/>
    <property type="project" value="MGI"/>
</dbReference>
<dbReference type="GO" id="GO:2000288">
    <property type="term" value="P:positive regulation of myoblast proliferation"/>
    <property type="evidence" value="ECO:0000316"/>
    <property type="project" value="MGI"/>
</dbReference>
<dbReference type="InterPro" id="IPR010510">
    <property type="entry name" value="FGF1-bd"/>
</dbReference>
<dbReference type="PANTHER" id="PTHR15258">
    <property type="entry name" value="FGF BINDING PROTEIN-RELATED"/>
    <property type="match status" value="1"/>
</dbReference>
<dbReference type="PANTHER" id="PTHR15258:SF2">
    <property type="entry name" value="FIBROBLAST GROWTH FACTOR-BINDING PROTEIN 1"/>
    <property type="match status" value="1"/>
</dbReference>
<dbReference type="Pfam" id="PF06473">
    <property type="entry name" value="FGF-BP1"/>
    <property type="match status" value="1"/>
</dbReference>
<evidence type="ECO:0000250" key="1"/>
<evidence type="ECO:0000250" key="2">
    <source>
        <dbReference type="UniProtKB" id="Q14512"/>
    </source>
</evidence>
<evidence type="ECO:0000255" key="3"/>
<evidence type="ECO:0000256" key="4">
    <source>
        <dbReference type="SAM" id="MobiDB-lite"/>
    </source>
</evidence>
<evidence type="ECO:0000269" key="5">
    <source>
    </source>
</evidence>
<evidence type="ECO:0000269" key="6">
    <source>
    </source>
</evidence>
<evidence type="ECO:0000269" key="7">
    <source>
    </source>
</evidence>
<evidence type="ECO:0000305" key="8"/>
<organism>
    <name type="scientific">Mus musculus</name>
    <name type="common">Mouse</name>
    <dbReference type="NCBI Taxonomy" id="10090"/>
    <lineage>
        <taxon>Eukaryota</taxon>
        <taxon>Metazoa</taxon>
        <taxon>Chordata</taxon>
        <taxon>Craniata</taxon>
        <taxon>Vertebrata</taxon>
        <taxon>Euteleostomi</taxon>
        <taxon>Mammalia</taxon>
        <taxon>Eutheria</taxon>
        <taxon>Euarchontoglires</taxon>
        <taxon>Glires</taxon>
        <taxon>Rodentia</taxon>
        <taxon>Myomorpha</taxon>
        <taxon>Muroidea</taxon>
        <taxon>Muridae</taxon>
        <taxon>Murinae</taxon>
        <taxon>Mus</taxon>
        <taxon>Mus</taxon>
    </lineage>
</organism>
<sequence length="251" mass="28294">MRLHSLILLSFLLLATQAFSEKVRKRAKNAPHSTAEEGVEGSAPSLGKAQNKQRSRTSKSLTHGKFVTKDQATCRWAVTEEEQGISLKVQCTQADQEFSCVFAGDPTDCLKHDKDQIYWKQVARTLRKQKNICRNAKSVLKTRVCRKRFPESNLKLVNPNARGNTKPRKEKAEVSAREHNKVQEAVSTEPNRVKEDITLNPAATQTMAIRDPECLEDPDVLNQRKTALEFCGESWSSICTFFLNMLQATSC</sequence>
<reference key="1">
    <citation type="journal article" date="1997" name="Oncogene">
        <title>Expression of a binding protein for FGF is associated with epithelial development and skin carcinogenesis.</title>
        <authorList>
            <person name="Kurtz A."/>
            <person name="Wang H.-L."/>
            <person name="Darwiche N."/>
            <person name="Harris V."/>
            <person name="Wellstein A."/>
        </authorList>
    </citation>
    <scope>NUCLEOTIDE SEQUENCE [MRNA]</scope>
    <scope>INTERACTION WITH FGF2</scope>
    <scope>TISSUE SPECIFICITY</scope>
    <scope>DEVELOPMENTAL STAGE</scope>
    <source>
        <strain>129</strain>
    </source>
</reference>
<reference key="2">
    <citation type="submission" date="1998-05" db="EMBL/GenBank/DDBJ databases">
        <title>Coding region for the murine homolog of human FGF binding protein HBp17.</title>
        <authorList>
            <person name="Whitney R.G."/>
            <person name="Sato J.D."/>
        </authorList>
    </citation>
    <scope>NUCLEOTIDE SEQUENCE [MRNA]</scope>
    <source>
        <strain>BALB/cJ</strain>
        <tissue>Keratinocyte</tissue>
    </source>
</reference>
<reference key="3">
    <citation type="journal article" date="2005" name="Science">
        <title>The transcriptional landscape of the mammalian genome.</title>
        <authorList>
            <person name="Carninci P."/>
            <person name="Kasukawa T."/>
            <person name="Katayama S."/>
            <person name="Gough J."/>
            <person name="Frith M.C."/>
            <person name="Maeda N."/>
            <person name="Oyama R."/>
            <person name="Ravasi T."/>
            <person name="Lenhard B."/>
            <person name="Wells C."/>
            <person name="Kodzius R."/>
            <person name="Shimokawa K."/>
            <person name="Bajic V.B."/>
            <person name="Brenner S.E."/>
            <person name="Batalov S."/>
            <person name="Forrest A.R."/>
            <person name="Zavolan M."/>
            <person name="Davis M.J."/>
            <person name="Wilming L.G."/>
            <person name="Aidinis V."/>
            <person name="Allen J.E."/>
            <person name="Ambesi-Impiombato A."/>
            <person name="Apweiler R."/>
            <person name="Aturaliya R.N."/>
            <person name="Bailey T.L."/>
            <person name="Bansal M."/>
            <person name="Baxter L."/>
            <person name="Beisel K.W."/>
            <person name="Bersano T."/>
            <person name="Bono H."/>
            <person name="Chalk A.M."/>
            <person name="Chiu K.P."/>
            <person name="Choudhary V."/>
            <person name="Christoffels A."/>
            <person name="Clutterbuck D.R."/>
            <person name="Crowe M.L."/>
            <person name="Dalla E."/>
            <person name="Dalrymple B.P."/>
            <person name="de Bono B."/>
            <person name="Della Gatta G."/>
            <person name="di Bernardo D."/>
            <person name="Down T."/>
            <person name="Engstrom P."/>
            <person name="Fagiolini M."/>
            <person name="Faulkner G."/>
            <person name="Fletcher C.F."/>
            <person name="Fukushima T."/>
            <person name="Furuno M."/>
            <person name="Futaki S."/>
            <person name="Gariboldi M."/>
            <person name="Georgii-Hemming P."/>
            <person name="Gingeras T.R."/>
            <person name="Gojobori T."/>
            <person name="Green R.E."/>
            <person name="Gustincich S."/>
            <person name="Harbers M."/>
            <person name="Hayashi Y."/>
            <person name="Hensch T.K."/>
            <person name="Hirokawa N."/>
            <person name="Hill D."/>
            <person name="Huminiecki L."/>
            <person name="Iacono M."/>
            <person name="Ikeo K."/>
            <person name="Iwama A."/>
            <person name="Ishikawa T."/>
            <person name="Jakt M."/>
            <person name="Kanapin A."/>
            <person name="Katoh M."/>
            <person name="Kawasawa Y."/>
            <person name="Kelso J."/>
            <person name="Kitamura H."/>
            <person name="Kitano H."/>
            <person name="Kollias G."/>
            <person name="Krishnan S.P."/>
            <person name="Kruger A."/>
            <person name="Kummerfeld S.K."/>
            <person name="Kurochkin I.V."/>
            <person name="Lareau L.F."/>
            <person name="Lazarevic D."/>
            <person name="Lipovich L."/>
            <person name="Liu J."/>
            <person name="Liuni S."/>
            <person name="McWilliam S."/>
            <person name="Madan Babu M."/>
            <person name="Madera M."/>
            <person name="Marchionni L."/>
            <person name="Matsuda H."/>
            <person name="Matsuzawa S."/>
            <person name="Miki H."/>
            <person name="Mignone F."/>
            <person name="Miyake S."/>
            <person name="Morris K."/>
            <person name="Mottagui-Tabar S."/>
            <person name="Mulder N."/>
            <person name="Nakano N."/>
            <person name="Nakauchi H."/>
            <person name="Ng P."/>
            <person name="Nilsson R."/>
            <person name="Nishiguchi S."/>
            <person name="Nishikawa S."/>
            <person name="Nori F."/>
            <person name="Ohara O."/>
            <person name="Okazaki Y."/>
            <person name="Orlando V."/>
            <person name="Pang K.C."/>
            <person name="Pavan W.J."/>
            <person name="Pavesi G."/>
            <person name="Pesole G."/>
            <person name="Petrovsky N."/>
            <person name="Piazza S."/>
            <person name="Reed J."/>
            <person name="Reid J.F."/>
            <person name="Ring B.Z."/>
            <person name="Ringwald M."/>
            <person name="Rost B."/>
            <person name="Ruan Y."/>
            <person name="Salzberg S.L."/>
            <person name="Sandelin A."/>
            <person name="Schneider C."/>
            <person name="Schoenbach C."/>
            <person name="Sekiguchi K."/>
            <person name="Semple C.A."/>
            <person name="Seno S."/>
            <person name="Sessa L."/>
            <person name="Sheng Y."/>
            <person name="Shibata Y."/>
            <person name="Shimada H."/>
            <person name="Shimada K."/>
            <person name="Silva D."/>
            <person name="Sinclair B."/>
            <person name="Sperling S."/>
            <person name="Stupka E."/>
            <person name="Sugiura K."/>
            <person name="Sultana R."/>
            <person name="Takenaka Y."/>
            <person name="Taki K."/>
            <person name="Tammoja K."/>
            <person name="Tan S.L."/>
            <person name="Tang S."/>
            <person name="Taylor M.S."/>
            <person name="Tegner J."/>
            <person name="Teichmann S.A."/>
            <person name="Ueda H.R."/>
            <person name="van Nimwegen E."/>
            <person name="Verardo R."/>
            <person name="Wei C.L."/>
            <person name="Yagi K."/>
            <person name="Yamanishi H."/>
            <person name="Zabarovsky E."/>
            <person name="Zhu S."/>
            <person name="Zimmer A."/>
            <person name="Hide W."/>
            <person name="Bult C."/>
            <person name="Grimmond S.M."/>
            <person name="Teasdale R.D."/>
            <person name="Liu E.T."/>
            <person name="Brusic V."/>
            <person name="Quackenbush J."/>
            <person name="Wahlestedt C."/>
            <person name="Mattick J.S."/>
            <person name="Hume D.A."/>
            <person name="Kai C."/>
            <person name="Sasaki D."/>
            <person name="Tomaru Y."/>
            <person name="Fukuda S."/>
            <person name="Kanamori-Katayama M."/>
            <person name="Suzuki M."/>
            <person name="Aoki J."/>
            <person name="Arakawa T."/>
            <person name="Iida J."/>
            <person name="Imamura K."/>
            <person name="Itoh M."/>
            <person name="Kato T."/>
            <person name="Kawaji H."/>
            <person name="Kawagashira N."/>
            <person name="Kawashima T."/>
            <person name="Kojima M."/>
            <person name="Kondo S."/>
            <person name="Konno H."/>
            <person name="Nakano K."/>
            <person name="Ninomiya N."/>
            <person name="Nishio T."/>
            <person name="Okada M."/>
            <person name="Plessy C."/>
            <person name="Shibata K."/>
            <person name="Shiraki T."/>
            <person name="Suzuki S."/>
            <person name="Tagami M."/>
            <person name="Waki K."/>
            <person name="Watahiki A."/>
            <person name="Okamura-Oho Y."/>
            <person name="Suzuki H."/>
            <person name="Kawai J."/>
            <person name="Hayashizaki Y."/>
        </authorList>
    </citation>
    <scope>NUCLEOTIDE SEQUENCE [LARGE SCALE MRNA]</scope>
    <source>
        <strain>C57BL/6J</strain>
        <tissue>Amnion</tissue>
    </source>
</reference>
<reference key="4">
    <citation type="journal article" date="2004" name="Genome Res.">
        <title>The status, quality, and expansion of the NIH full-length cDNA project: the Mammalian Gene Collection (MGC).</title>
        <authorList>
            <consortium name="The MGC Project Team"/>
        </authorList>
    </citation>
    <scope>NUCLEOTIDE SEQUENCE [LARGE SCALE MRNA]</scope>
    <source>
        <strain>C57BL/6J</strain>
        <tissue>Thymus</tissue>
    </source>
</reference>
<reference key="5">
    <citation type="journal article" date="2002" name="Histochem. Cell Biol.">
        <title>Immunolocalization of an FGF-binding protein reveals a widespread expression pattern during different stages of mouse embryo development.</title>
        <authorList>
            <person name="Aigner A."/>
            <person name="Ray P.E."/>
            <person name="Czubayko F."/>
            <person name="Wellstein A."/>
        </authorList>
    </citation>
    <scope>DEVELOPMENTAL STAGE</scope>
</reference>
<reference key="6">
    <citation type="journal article" date="2005" name="Oncogene">
        <title>The fibroblast growth factor binding protein is a novel interaction partner of FGF-7, FGF-10 and FGF-22 and regulates FGF activity: implications for epithelial repair.</title>
        <authorList>
            <person name="Beer H.-D."/>
            <person name="Bittner M."/>
            <person name="Niklaus G."/>
            <person name="Munding C."/>
            <person name="Max N."/>
            <person name="Goppelt A."/>
            <person name="Werner S."/>
        </authorList>
    </citation>
    <scope>TISSUE SPECIFICITY</scope>
</reference>